<evidence type="ECO:0000250" key="1">
    <source>
        <dbReference type="UniProtKB" id="Q94FB7"/>
    </source>
</evidence>
<evidence type="ECO:0000255" key="2"/>
<evidence type="ECO:0000255" key="3">
    <source>
        <dbReference type="PROSITE-ProRule" id="PRU01348"/>
    </source>
</evidence>
<evidence type="ECO:0000256" key="4">
    <source>
        <dbReference type="SAM" id="MobiDB-lite"/>
    </source>
</evidence>
<evidence type="ECO:0000269" key="5">
    <source>
    </source>
</evidence>
<evidence type="ECO:0000269" key="6">
    <source>
    </source>
</evidence>
<evidence type="ECO:0000269" key="7">
    <source>
    </source>
</evidence>
<evidence type="ECO:0000303" key="8">
    <source>
    </source>
</evidence>
<evidence type="ECO:0000305" key="9">
    <source>
    </source>
</evidence>
<keyword id="KW-0275">Fatty acid biosynthesis</keyword>
<keyword id="KW-0276">Fatty acid metabolism</keyword>
<keyword id="KW-0444">Lipid biosynthesis</keyword>
<keyword id="KW-0443">Lipid metabolism</keyword>
<keyword id="KW-0511">Multifunctional enzyme</keyword>
<keyword id="KW-0560">Oxidoreductase</keyword>
<keyword id="KW-0596">Phosphopantetheine</keyword>
<keyword id="KW-0597">Phosphoprotein</keyword>
<keyword id="KW-0808">Transferase</keyword>
<dbReference type="EC" id="2.3.1.-" evidence="5"/>
<dbReference type="EMBL" id="KX651613">
    <property type="protein sequence ID" value="AOG21005.1"/>
    <property type="molecule type" value="Genomic_DNA"/>
</dbReference>
<dbReference type="SMR" id="A0A1B3PEI8"/>
<dbReference type="UniPathway" id="UPA00094"/>
<dbReference type="GO" id="GO:0016746">
    <property type="term" value="F:acyltransferase activity"/>
    <property type="evidence" value="ECO:0007669"/>
    <property type="project" value="InterPro"/>
</dbReference>
<dbReference type="GO" id="GO:0016491">
    <property type="term" value="F:oxidoreductase activity"/>
    <property type="evidence" value="ECO:0007669"/>
    <property type="project" value="UniProtKB-KW"/>
</dbReference>
<dbReference type="GO" id="GO:0006633">
    <property type="term" value="P:fatty acid biosynthetic process"/>
    <property type="evidence" value="ECO:0007669"/>
    <property type="project" value="UniProtKB-UniPathway"/>
</dbReference>
<dbReference type="CDD" id="cd04742">
    <property type="entry name" value="NPD_FabD"/>
    <property type="match status" value="1"/>
</dbReference>
<dbReference type="CDD" id="cd00833">
    <property type="entry name" value="PKS"/>
    <property type="match status" value="2"/>
</dbReference>
<dbReference type="Gene3D" id="3.40.47.10">
    <property type="match status" value="2"/>
</dbReference>
<dbReference type="Gene3D" id="3.20.20.70">
    <property type="entry name" value="Aldolase class I"/>
    <property type="match status" value="2"/>
</dbReference>
<dbReference type="Gene3D" id="3.40.366.10">
    <property type="entry name" value="Malonyl-Coenzyme A Acyl Carrier Protein, domain 2"/>
    <property type="match status" value="1"/>
</dbReference>
<dbReference type="InterPro" id="IPR001227">
    <property type="entry name" value="Ac_transferase_dom_sf"/>
</dbReference>
<dbReference type="InterPro" id="IPR016035">
    <property type="entry name" value="Acyl_Trfase/lysoPLipase"/>
</dbReference>
<dbReference type="InterPro" id="IPR013785">
    <property type="entry name" value="Aldolase_TIM"/>
</dbReference>
<dbReference type="InterPro" id="IPR049489">
    <property type="entry name" value="FabD-like_helical_ins"/>
</dbReference>
<dbReference type="InterPro" id="IPR014031">
    <property type="entry name" value="Ketoacyl_synth_C"/>
</dbReference>
<dbReference type="InterPro" id="IPR014030">
    <property type="entry name" value="Ketoacyl_synth_N"/>
</dbReference>
<dbReference type="InterPro" id="IPR014179">
    <property type="entry name" value="PfaD-like_TIM-barrel"/>
</dbReference>
<dbReference type="InterPro" id="IPR052568">
    <property type="entry name" value="PKS-FAS_Synthase"/>
</dbReference>
<dbReference type="InterPro" id="IPR020841">
    <property type="entry name" value="PKS_Beta-ketoAc_synthase_dom"/>
</dbReference>
<dbReference type="InterPro" id="IPR016039">
    <property type="entry name" value="Thiolase-like"/>
</dbReference>
<dbReference type="NCBIfam" id="TIGR02814">
    <property type="entry name" value="pfaD_fam"/>
    <property type="match status" value="1"/>
</dbReference>
<dbReference type="PANTHER" id="PTHR43074:SF1">
    <property type="entry name" value="BETA-KETOACYL SYNTHASE FAMILY PROTEIN-RELATED"/>
    <property type="match status" value="1"/>
</dbReference>
<dbReference type="PANTHER" id="PTHR43074">
    <property type="entry name" value="OMEGA-3 POLYUNSATURATED FATTY ACID SYNTHASE PFAB-RELATED"/>
    <property type="match status" value="1"/>
</dbReference>
<dbReference type="Pfam" id="PF21607">
    <property type="entry name" value="FabD_helical_ins"/>
    <property type="match status" value="1"/>
</dbReference>
<dbReference type="Pfam" id="PF00109">
    <property type="entry name" value="ketoacyl-synt"/>
    <property type="match status" value="2"/>
</dbReference>
<dbReference type="Pfam" id="PF02801">
    <property type="entry name" value="Ketoacyl-synt_C"/>
    <property type="match status" value="2"/>
</dbReference>
<dbReference type="SMART" id="SM00825">
    <property type="entry name" value="PKS_KS"/>
    <property type="match status" value="1"/>
</dbReference>
<dbReference type="SUPFAM" id="SSF52151">
    <property type="entry name" value="FabD/lysophospholipase-like"/>
    <property type="match status" value="1"/>
</dbReference>
<dbReference type="SUPFAM" id="SSF51412">
    <property type="entry name" value="Inosine monophosphate dehydrogenase (IMPDH)"/>
    <property type="match status" value="1"/>
</dbReference>
<dbReference type="SUPFAM" id="SSF53901">
    <property type="entry name" value="Thiolase-like"/>
    <property type="match status" value="4"/>
</dbReference>
<dbReference type="PROSITE" id="PS52004">
    <property type="entry name" value="KS3_2"/>
    <property type="match status" value="2"/>
</dbReference>
<proteinExistence type="evidence at protein level"/>
<reference key="1">
    <citation type="journal article" date="2016" name="J. Lipid Res.">
        <title>Biosynthetic mechanism of very long chain polyunsaturated fatty acids in Thraustochytrium sp. 26185.</title>
        <authorList>
            <person name="Meesapyodsuk D."/>
            <person name="Qiu X."/>
        </authorList>
    </citation>
    <scope>NUCLEOTIDE SEQUENCE [GENOMIC DNA]</scope>
    <scope>FUNCTION</scope>
    <scope>DOMAIN</scope>
    <scope>SUBUNIT</scope>
    <scope>CATALYTIC ACTIVITY</scope>
    <source>
        <strain>ATCC 26185 / S-3</strain>
    </source>
</reference>
<reference key="2">
    <citation type="journal article" date="2017" name="J. Clin. Lipidol.">
        <title>Use of supplemental long-chain omega-3 fatty acids and risk for cardiac death: An updated meta-analysis and review of research gaps.</title>
        <authorList>
            <person name="Maki K.C."/>
            <person name="Palacios O.M."/>
            <person name="Bell M."/>
            <person name="Toth P.P."/>
        </authorList>
    </citation>
    <scope>BIOTECHNOLOGY</scope>
</reference>
<reference key="3">
    <citation type="journal article" date="2018" name="Nutr. Neurosci.">
        <title>Omega-3 fatty acids' supplementation in Alzheimer's disease: A systematic review.</title>
        <authorList>
            <person name="Canhada S."/>
            <person name="Castro K."/>
            <person name="Perry I.S."/>
            <person name="Luft V.C."/>
        </authorList>
    </citation>
    <scope>BIOTECHNOLOGY</scope>
</reference>
<gene>
    <name evidence="8" type="primary">ORF-B</name>
</gene>
<accession>A0A1B3PEI8</accession>
<organism>
    <name type="scientific">Thraustochytrium sp. (strain ATCC 26185 / S-3)</name>
    <dbReference type="NCBI Taxonomy" id="672127"/>
    <lineage>
        <taxon>Eukaryota</taxon>
        <taxon>Sar</taxon>
        <taxon>Stramenopiles</taxon>
        <taxon>Bigyra</taxon>
        <taxon>Labyrinthulomycetes</taxon>
        <taxon>Thraustochytrida</taxon>
        <taxon>Thraustochytriaceae</taxon>
        <taxon>Thraustochytrium</taxon>
    </lineage>
</organism>
<comment type="function">
    <text evidence="1 5">Poliketide synthase-like protein; part of the polyunsaturated fatty acid synthase composed of the 3 PKS-like subunits A, B and C (PubMed:27527703). While the saturated fatty acids (SFAs) in Thraustochytrium are produced by the conventional fatty acid synthase (FAS) pathway, polyunsaturated fatty acids (PUFAs) including docosahexeanoic acid (DHA) and docosapentaenoic acid (DPA) are synthesized via an anaerobical PKS pathway (PubMed:27527703). PUFA synthase assimilates fatty acyl-CoA, the product of FAS, as the starter unit to synthesize DPA, and this starter unit may be butyryl-CoA, hexanoyl-CoA, or octanoyl-CoA (By similarity). DPA and DHA biosynthesis seem to differ by the reduction at the N-3 position by PUFA synthase, not the extension of carbon chain (By similarity). In DHA biosynthesis, PUFA synthase extends the fatty acyl chain from the methyl toward the carboxyl end, and the double bond is formed when the carbon chain is growing, instead of afterward (By similarity). Therefore, PUFA synthase is unable to transform DPA to DHA, suggesting that DPA is not the precursor of DHA (By similarity). Moreover, DPA molecule is partly extended by FAS KS domain, so DPA biosynthesis is less dependent on PUFA synthase KS domain than DHA (By similarity).</text>
</comment>
<comment type="pathway">
    <text evidence="5">Lipid metabolism; fatty acid biosynthesis.</text>
</comment>
<comment type="subunit">
    <text evidence="5">Component of the polyunsaturated fatty acid synthase complex composed of at least ORF-A, ORF-B and ORF-C.</text>
</comment>
<comment type="domain">
    <text evidence="9">Multidomain protein; including a ketosynthase (KS) domain that catalyzes repeated decarboxylative condensation to elongate the fatty acid chain; a chain length factor (CLF) domain that controls the chain length; an acyltransferase (AT) domain that loads extender and intermediate acyl units, and an enoylreductase (ER) domain that reduces enoyl groups to alkyl groups.</text>
</comment>
<comment type="biotechnology">
    <text evidence="6 7">Polyunsaturated fatty acids may be beneficial in prevention of cardiovascular disease and treatment of mild Alzheimer's disease.</text>
</comment>
<comment type="miscellaneous">
    <text evidence="9">The homology between the prokaryotic Shewanella and eukaryotic Labyrinthulomycetes genes suggests that the polyunsaturated fatty acid synthase subunits have undergone lateral gene transfer.</text>
</comment>
<feature type="chain" id="PRO_0000456889" description="Polyunsaturated fatty acid synthase subunit B">
    <location>
        <begin position="1"/>
        <end position="2049"/>
    </location>
</feature>
<feature type="domain" description="Ketosynthase family 3 (KS3) 1" evidence="3 9">
    <location>
        <begin position="15"/>
        <end position="442"/>
    </location>
</feature>
<feature type="domain" description="Ketosynthase family 3 (KS3) 2" evidence="3">
    <location>
        <begin position="468"/>
        <end position="908"/>
    </location>
</feature>
<feature type="region of interest" description="Chain length factor (CLF) domain" evidence="2 9">
    <location>
        <begin position="467"/>
        <end position="984"/>
    </location>
</feature>
<feature type="region of interest" description="Acyltransferase (AT) domain" evidence="2 9">
    <location>
        <begin position="1044"/>
        <end position="1377"/>
    </location>
</feature>
<feature type="region of interest" description="Disordered" evidence="4">
    <location>
        <begin position="1500"/>
        <end position="1531"/>
    </location>
</feature>
<feature type="region of interest" description="Enoyl reductase (ER) domain" evidence="2 9">
    <location>
        <begin position="1579"/>
        <end position="1887"/>
    </location>
</feature>
<feature type="compositionally biased region" description="Low complexity" evidence="4">
    <location>
        <begin position="1505"/>
        <end position="1531"/>
    </location>
</feature>
<feature type="active site" description="For beta-ketoacyl synthase 1 activity" evidence="3">
    <location>
        <position position="196"/>
    </location>
</feature>
<feature type="active site" description="For beta-ketoacyl synthase 1 activity" evidence="3">
    <location>
        <position position="333"/>
    </location>
</feature>
<feature type="active site" description="For beta-ketoacyl synthase 1 activity" evidence="3">
    <location>
        <position position="368"/>
    </location>
</feature>
<sequence>MAARNVSAAHEMHDEKRIAVVGMAVQYAGCKTKDEFWEVLMNGKVESGKISDKRLGSNHRAEHYKAQRSKYADTFCNETYGCLDENEVDNEHELLLSLAKQALAETSVKDSTRCGIVSGCLSFPMDNLQGELLNVYQSHVEKKLGARVFKDASHWSEREQSQKPEAGDRRVFMDPASFVAEELNLGALHYSVDAACATALYVLRLAQDHLVSGAADVMLCGATCLPEPFFILSGFSTFQAMPVGTGQGVSMPLHKDSQGLTPGEGGSIMVLKRLEDAVRDGDHIYGTLLGANLSNAGTGLPLKPLLPAEKACLMDTYKRVNVHPHKVQYVECHATGTPQGDRVEIDAVKACFEGKVPRFGTTKGNFGHTLVAAGFAGMCKVLLAMKHGVIPPTPGIDASTQIDPLVVAGAAIPWPETDGEPKRAGLSAFGFGGTNAHAVFEEHDPSKVACAGRDSVTALSARCGGENNMRIAITGMDATFGALKGLDAFERAIYTGTHGAIPLPEKRWRFLGKDRDFLDLCGVKSTPHGCYIEDVEVDFQRLRTPMTPEDMLLPQQLLAVTTIDRAILDSGMEKGGNVAVFVGLGTDLELYRHRARVALKERLRPEAAARLDPMMQYINDCGTSTSYTSYIGNLVATRVSSQWGFTGPSFTITEGNNSVYRCAELGKYLLETGEVDGVVIAGVDLCGSAENLYVKSRRFKVASGEAPRASFDAAADGYFVGEGCGALVLKRETSCTEKDRIYACVDAIVPGNMPGACLREALDQARVQPGAVEMLELSADSARHLRDASVLPKELTAEEELATLQSVLADASKLPRHVAAGSVKATVGDTGYASGAASLIKAALCVHNRYLPSNGDAFEGPAPEAPWGEALFACQSSRAWLKNPGERRYAAVSGVSETRSCYSVLLSDAEGHHERENRQSLDEEAPKLIVLRADSHEEILARLDKIRERFLQPTGAAPREADLKDQARRLFLELLGETLAQEADAKAGRGPQKRLALSIVSTPAKLQREVELAAKGIPRCLKMRRDWTSPAGSRYAPEPLASDRVAFMYGEGRSPYYGILQDMHRIWPALHEVINEKTTSLWSEGDRWVMPRASSKAELEEQREAFDRNQIEMFRLGILSSMSFTTLARDVLNITPKAAFGLSLGEISMLFSYSDKNGKNSDRLTRDLRASRVWNEALAIEFNALREAWGISKDTPKDEFWQGYIVHGTKQAIEDAIAPDSKYVRLTIINDGNSALISGKPDACKAAIARLGSKVPALPVSQGMCGHCPEVAPYAKEIAEIHQILDIPDTDVNLFSSVSLKRLVPRSTGAKDECAPENVGEYLSELYTRQADFPAIVETVYKQNYDIFVEAGPNNHRSSAVRATLGPQRSHVTGAMDKQNEDAWTTIVKLMATLQAHRVPGATIAPLYHTKLVAEAHACYESFAKGEKPKKNKFVRKIQVNGRFDPKREPISAADLEKLPPADPSIESAIAGRVMTPVAPKFYSRLNIDQQDEARDPILNKDNQPAVAPAATAAPTPKPKPAASSGKPVPSADALRDALLSTDRMLSLGTASASGDLVETAAEDASVIIPPCAVSDLGSRAFMKTYGVNAPMYTGAMAKGIASADLVIAAGKQGMLGSFGAGGLPMHLVREAVDKIQAALPHGPYAVNLIHSPFDSNLEKGNVDLFLEKGVTIVEASAFMTLTPQVVRYRAAGLSRNADGSVRIRNRLIGKVSRTELAGMFMRPAPENLLEKLIASGEITQEQAELARRVPVADDIAVEADSGGHTDNRPIHVILPLIINLRDRVHRECGFPPELRVRVGAGGGIGCPQAALAAFNMGAAFIVTGTVNQLAKQSGTCDNVRKQLSKATYSDVCMAPAADMFEEGVKLQVLKKGTMFPSRANKLYELFCKYDSFESMAPGELERVEKRIFKRPLQEVWDETKDFYINRLHNPEKIQRAEERDPKLKMSLCFRWYLGLASRWANTGASDRVMDYQVWCGPAIGSYNDFVKGTYLDPEVSGEYPCVVQINKQILRGACFLRRLETLRNAPLASSAEALVSQVDDTYVPANKL</sequence>
<protein>
    <recommendedName>
        <fullName evidence="8">Polyunsaturated fatty acid synthase subunit B</fullName>
        <shortName evidence="8">PUFAs-B</shortName>
        <ecNumber evidence="5">2.3.1.-</ecNumber>
    </recommendedName>
</protein>
<name>PFA2_THRS2</name>